<organism>
    <name type="scientific">Danio rerio</name>
    <name type="common">Zebrafish</name>
    <name type="synonym">Brachydanio rerio</name>
    <dbReference type="NCBI Taxonomy" id="7955"/>
    <lineage>
        <taxon>Eukaryota</taxon>
        <taxon>Metazoa</taxon>
        <taxon>Chordata</taxon>
        <taxon>Craniata</taxon>
        <taxon>Vertebrata</taxon>
        <taxon>Euteleostomi</taxon>
        <taxon>Actinopterygii</taxon>
        <taxon>Neopterygii</taxon>
        <taxon>Teleostei</taxon>
        <taxon>Ostariophysi</taxon>
        <taxon>Cypriniformes</taxon>
        <taxon>Danionidae</taxon>
        <taxon>Danioninae</taxon>
        <taxon>Danio</taxon>
    </lineage>
</organism>
<feature type="chain" id="PRO_0000337682" description="Sodium-coupled monocarboxylate transporter 2">
    <location>
        <begin position="1"/>
        <end position="623"/>
    </location>
</feature>
<feature type="topological domain" description="Extracellular" evidence="2">
    <location>
        <begin position="1"/>
        <end position="10"/>
    </location>
</feature>
<feature type="transmembrane region" description="Helical" evidence="2">
    <location>
        <begin position="11"/>
        <end position="31"/>
    </location>
</feature>
<feature type="topological domain" description="Cytoplasmic" evidence="2">
    <location>
        <begin position="32"/>
        <end position="50"/>
    </location>
</feature>
<feature type="transmembrane region" description="Helical" evidence="2">
    <location>
        <begin position="51"/>
        <end position="71"/>
    </location>
</feature>
<feature type="topological domain" description="Extracellular" evidence="2">
    <location>
        <begin position="72"/>
        <end position="83"/>
    </location>
</feature>
<feature type="transmembrane region" description="Helical" evidence="2">
    <location>
        <begin position="84"/>
        <end position="104"/>
    </location>
</feature>
<feature type="topological domain" description="Cytoplasmic" evidence="2">
    <location>
        <begin position="105"/>
        <end position="129"/>
    </location>
</feature>
<feature type="transmembrane region" description="Helical" evidence="2">
    <location>
        <begin position="130"/>
        <end position="150"/>
    </location>
</feature>
<feature type="topological domain" description="Extracellular" evidence="2">
    <location>
        <begin position="151"/>
        <end position="158"/>
    </location>
</feature>
<feature type="transmembrane region" description="Helical" evidence="2">
    <location>
        <begin position="159"/>
        <end position="179"/>
    </location>
</feature>
<feature type="topological domain" description="Cytoplasmic" evidence="2">
    <location>
        <begin position="180"/>
        <end position="181"/>
    </location>
</feature>
<feature type="transmembrane region" description="Helical" evidence="2">
    <location>
        <begin position="182"/>
        <end position="202"/>
    </location>
</feature>
<feature type="topological domain" description="Extracellular" evidence="2">
    <location>
        <begin position="203"/>
        <end position="236"/>
    </location>
</feature>
<feature type="transmembrane region" description="Helical" evidence="2">
    <location>
        <begin position="237"/>
        <end position="257"/>
    </location>
</feature>
<feature type="topological domain" description="Cytoplasmic" evidence="2">
    <location>
        <begin position="258"/>
        <end position="276"/>
    </location>
</feature>
<feature type="transmembrane region" description="Helical" evidence="2">
    <location>
        <begin position="277"/>
        <end position="297"/>
    </location>
</feature>
<feature type="topological domain" description="Extracellular" evidence="2">
    <location>
        <begin position="298"/>
        <end position="322"/>
    </location>
</feature>
<feature type="transmembrane region" description="Helical" evidence="2">
    <location>
        <begin position="323"/>
        <end position="343"/>
    </location>
</feature>
<feature type="topological domain" description="Cytoplasmic" evidence="2">
    <location>
        <begin position="344"/>
        <end position="386"/>
    </location>
</feature>
<feature type="transmembrane region" description="Helical" evidence="2">
    <location>
        <begin position="387"/>
        <end position="407"/>
    </location>
</feature>
<feature type="topological domain" description="Extracellular" evidence="2">
    <location>
        <begin position="408"/>
        <end position="412"/>
    </location>
</feature>
<feature type="transmembrane region" description="Helical" evidence="2">
    <location>
        <begin position="413"/>
        <end position="433"/>
    </location>
</feature>
<feature type="topological domain" description="Cytoplasmic" evidence="2">
    <location>
        <begin position="434"/>
        <end position="438"/>
    </location>
</feature>
<feature type="transmembrane region" description="Helical" evidence="2">
    <location>
        <begin position="439"/>
        <end position="459"/>
    </location>
</feature>
<feature type="topological domain" description="Extracellular" evidence="2">
    <location>
        <begin position="460"/>
        <end position="510"/>
    </location>
</feature>
<feature type="transmembrane region" description="Helical" evidence="2">
    <location>
        <begin position="511"/>
        <end position="531"/>
    </location>
</feature>
<feature type="topological domain" description="Cytoplasmic" evidence="2">
    <location>
        <begin position="532"/>
        <end position="623"/>
    </location>
</feature>
<feature type="glycosylation site" description="N-linked (GlcNAc...) asparagine" evidence="2">
    <location>
        <position position="465"/>
    </location>
</feature>
<feature type="glycosylation site" description="N-linked (GlcNAc...) asparagine" evidence="2">
    <location>
        <position position="478"/>
    </location>
</feature>
<protein>
    <recommendedName>
        <fullName>Sodium-coupled monocarboxylate transporter 2</fullName>
    </recommendedName>
    <alternativeName>
        <fullName evidence="4">Electroneutral sodium monocarboxylate cotransporter</fullName>
        <shortName evidence="4">zSMCTn</shortName>
    </alternativeName>
    <alternativeName>
        <fullName>Low-affinity sodium-lactate cotransporter</fullName>
    </alternativeName>
    <alternativeName>
        <fullName>Solute carrier family 5 member 12</fullName>
        <shortName>zSLC5A12</shortName>
    </alternativeName>
</protein>
<comment type="function">
    <text evidence="3">Acts as an electroneutral and low-affinity sodium (Na(+))-dependent sodium-coupled solute transporter. Catalyzes the transport across the plasma membrane of many monocarboxylates such as lactate, pyruvate, nicotinate, propionate, butyrate and beta-D-hydroxybutyrate.</text>
</comment>
<comment type="catalytic activity">
    <reaction evidence="3">
        <text>(S)-lactate(out) + Na(+)(out) = (S)-lactate(in) + Na(+)(in)</text>
        <dbReference type="Rhea" id="RHEA:75791"/>
        <dbReference type="ChEBI" id="CHEBI:16651"/>
        <dbReference type="ChEBI" id="CHEBI:29101"/>
    </reaction>
</comment>
<comment type="catalytic activity">
    <reaction evidence="3">
        <text>nicotinate(out) + Na(+)(out) = nicotinate(in) + Na(+)(in)</text>
        <dbReference type="Rhea" id="RHEA:75795"/>
        <dbReference type="ChEBI" id="CHEBI:29101"/>
        <dbReference type="ChEBI" id="CHEBI:32544"/>
    </reaction>
</comment>
<comment type="catalytic activity">
    <reaction evidence="3">
        <text>pyruvate(out) + Na(+)(out) = pyruvate(in) + Na(+)(in)</text>
        <dbReference type="Rhea" id="RHEA:75799"/>
        <dbReference type="ChEBI" id="CHEBI:15361"/>
        <dbReference type="ChEBI" id="CHEBI:29101"/>
    </reaction>
</comment>
<comment type="catalytic activity">
    <reaction evidence="3">
        <text>propanoate(out) + Na(+)(out) = propanoate(in) + Na(+)(in)</text>
        <dbReference type="Rhea" id="RHEA:75807"/>
        <dbReference type="ChEBI" id="CHEBI:17272"/>
        <dbReference type="ChEBI" id="CHEBI:29101"/>
    </reaction>
</comment>
<comment type="catalytic activity">
    <reaction evidence="3">
        <text>butanoate(out) + Na(+)(out) = butanoate(in) + Na(+)(in)</text>
        <dbReference type="Rhea" id="RHEA:75803"/>
        <dbReference type="ChEBI" id="CHEBI:17968"/>
        <dbReference type="ChEBI" id="CHEBI:29101"/>
    </reaction>
</comment>
<comment type="catalytic activity">
    <reaction evidence="3">
        <text>acetoacetate(out) + Na(+)(out) = acetoacetate(in) + Na(+)(in)</text>
        <dbReference type="Rhea" id="RHEA:75811"/>
        <dbReference type="ChEBI" id="CHEBI:13705"/>
        <dbReference type="ChEBI" id="CHEBI:29101"/>
    </reaction>
</comment>
<comment type="biophysicochemical properties">
    <kinetics>
        <KM evidence="3">1.81 mM for lactate</KM>
        <KM evidence="3">2.03 mM for pyruvate</KM>
        <KM evidence="3">23.68 mM for nicotinate</KM>
    </kinetics>
</comment>
<comment type="subcellular location">
    <subcellularLocation>
        <location evidence="1">Apical cell membrane</location>
        <topology evidence="1">Multi-pass membrane protein</topology>
    </subcellularLocation>
</comment>
<comment type="developmental stage">
    <text evidence="3">Expressed in brain and eye 24, 72 and 120 hours post-fertilization (hpf). At 72 hpf expressed in swim bladder and in pronephric tube. At 120 hpf expressed in brain, trabecular bar, eyes, otic capsule, stomach, gall bladder, gut and pancreas.</text>
</comment>
<comment type="similarity">
    <text evidence="5">Belongs to the sodium:solute symporter (SSF) (TC 2.A.21) family.</text>
</comment>
<dbReference type="EMBL" id="AY727860">
    <property type="protein sequence ID" value="AAW55812.1"/>
    <property type="molecule type" value="mRNA"/>
</dbReference>
<dbReference type="EMBL" id="BC053215">
    <property type="protein sequence ID" value="AAH53215.1"/>
    <property type="molecule type" value="mRNA"/>
</dbReference>
<dbReference type="RefSeq" id="NP_956662.1">
    <property type="nucleotide sequence ID" value="NM_200368.1"/>
</dbReference>
<dbReference type="SMR" id="Q7T384"/>
<dbReference type="FunCoup" id="Q7T384">
    <property type="interactions" value="270"/>
</dbReference>
<dbReference type="STRING" id="7955.ENSDARP00000128187"/>
<dbReference type="TCDB" id="2.A.21.5.4">
    <property type="family name" value="the solute:sodium symporter (sss) family"/>
</dbReference>
<dbReference type="GlyCosmos" id="Q7T384">
    <property type="glycosylation" value="2 sites, No reported glycans"/>
</dbReference>
<dbReference type="PaxDb" id="7955-ENSDARP00000128187"/>
<dbReference type="GeneID" id="393339"/>
<dbReference type="KEGG" id="dre:393339"/>
<dbReference type="AGR" id="ZFIN:ZDB-GENE-040426-1343"/>
<dbReference type="CTD" id="159963"/>
<dbReference type="ZFIN" id="ZDB-GENE-040426-1343">
    <property type="gene designation" value="slc5a12"/>
</dbReference>
<dbReference type="eggNOG" id="KOG2349">
    <property type="taxonomic scope" value="Eukaryota"/>
</dbReference>
<dbReference type="InParanoid" id="Q7T384"/>
<dbReference type="OrthoDB" id="6132759at2759"/>
<dbReference type="PhylomeDB" id="Q7T384"/>
<dbReference type="Reactome" id="R-DRE-427601">
    <property type="pathway name" value="Multifunctional anion exchangers"/>
</dbReference>
<dbReference type="PRO" id="PR:Q7T384"/>
<dbReference type="Proteomes" id="UP000000437">
    <property type="component" value="Chromosome 25"/>
</dbReference>
<dbReference type="GO" id="GO:0016324">
    <property type="term" value="C:apical plasma membrane"/>
    <property type="evidence" value="ECO:0000250"/>
    <property type="project" value="UniProtKB"/>
</dbReference>
<dbReference type="GO" id="GO:0140161">
    <property type="term" value="F:monocarboxylate:sodium symporter activity"/>
    <property type="evidence" value="ECO:0000314"/>
    <property type="project" value="UniProtKB"/>
</dbReference>
<dbReference type="GO" id="GO:0015355">
    <property type="term" value="F:secondary active monocarboxylate transmembrane transporter activity"/>
    <property type="evidence" value="ECO:0000314"/>
    <property type="project" value="ZFIN"/>
</dbReference>
<dbReference type="GO" id="GO:0015293">
    <property type="term" value="F:symporter activity"/>
    <property type="evidence" value="ECO:0000318"/>
    <property type="project" value="GO_Central"/>
</dbReference>
<dbReference type="GO" id="GO:0015718">
    <property type="term" value="P:monocarboxylic acid transport"/>
    <property type="evidence" value="ECO:0000314"/>
    <property type="project" value="UniProtKB"/>
</dbReference>
<dbReference type="GO" id="GO:0006814">
    <property type="term" value="P:sodium ion transport"/>
    <property type="evidence" value="ECO:0000318"/>
    <property type="project" value="GO_Central"/>
</dbReference>
<dbReference type="CDD" id="cd11520">
    <property type="entry name" value="SLC5sbd_SMCT2"/>
    <property type="match status" value="1"/>
</dbReference>
<dbReference type="FunFam" id="1.20.1730.10:FF:000007">
    <property type="entry name" value="Sodium-coupled monocarboxylate transporter 2"/>
    <property type="match status" value="1"/>
</dbReference>
<dbReference type="Gene3D" id="1.20.1730.10">
    <property type="entry name" value="Sodium/glucose cotransporter"/>
    <property type="match status" value="1"/>
</dbReference>
<dbReference type="InterPro" id="IPR038377">
    <property type="entry name" value="Na/Glc_symporter_sf"/>
</dbReference>
<dbReference type="InterPro" id="IPR001734">
    <property type="entry name" value="Na/solute_symporter"/>
</dbReference>
<dbReference type="InterPro" id="IPR042700">
    <property type="entry name" value="SMCT2_SLC5sbd"/>
</dbReference>
<dbReference type="InterPro" id="IPR051163">
    <property type="entry name" value="Sodium:Solute_Symporter_SSF"/>
</dbReference>
<dbReference type="NCBIfam" id="TIGR00813">
    <property type="entry name" value="sss"/>
    <property type="match status" value="1"/>
</dbReference>
<dbReference type="PANTHER" id="PTHR42985">
    <property type="entry name" value="SODIUM-COUPLED MONOCARBOXYLATE TRANSPORTER"/>
    <property type="match status" value="1"/>
</dbReference>
<dbReference type="PANTHER" id="PTHR42985:SF15">
    <property type="entry name" value="SODIUM-COUPLED MONOCARBOXYLATE TRANSPORTER 2"/>
    <property type="match status" value="1"/>
</dbReference>
<dbReference type="Pfam" id="PF00474">
    <property type="entry name" value="SSF"/>
    <property type="match status" value="1"/>
</dbReference>
<dbReference type="PROSITE" id="PS50283">
    <property type="entry name" value="NA_SOLUT_SYMP_3"/>
    <property type="match status" value="1"/>
</dbReference>
<sequence>METVGRFQAGDYVVFACLFVVSSGIGVFFAIKERNKAPSKEFLVGGRQMSCGPVALSLTASFMSAVTVIGAPADVYRFGASYVIFGVAYTFVVFFTAELFLPVFYRSGITSTYEYLELRFCKLVRVAATLIYIIQTILYTGVVVYAPALALNQVTGFDLWGSIFATGIVCTFYCTLGGLKAVVWTDAFQMVVMVVGFLTVLIQGSSRAGGIENVWSTSRTGGRLQVFDFDVSPLRRHTFWTLSVGGTFTWLGIYGVNQSTIQRCISCKTEGHARWALYLNLLGLWIILFCAVVSGLIMYSYYSHCDPWSSGLISAPDQLMPYFVMEILGAFPGLPGLFVACAFSGTLSTVAASINALATVMYEDFVSQCFPDLSNRAASWISKALCVAFGVACTTMAVAASYMGGIVQAALSIHGMCGGPVLGLFSLGILFPFTNLKGAVGGLIVGISLSFWVGVGAFIYPAPSNNTHALELNTAGCNITAAAFEPTSATVTQLTSDRNWLADSWYSMSYLYYSAVGFIGTVAAGLLITLLTGPMDPKLLKPGMTRSVKEVMCFCTEKFTEADLGEGKEDVGDFGKAWEKHPDQGCTLRMDEKFRCSCDNQQENGNTNAGFDHNETSIVQKKL</sequence>
<proteinExistence type="evidence at protein level"/>
<keyword id="KW-1003">Cell membrane</keyword>
<keyword id="KW-0325">Glycoprotein</keyword>
<keyword id="KW-0406">Ion transport</keyword>
<keyword id="KW-0472">Membrane</keyword>
<keyword id="KW-1185">Reference proteome</keyword>
<keyword id="KW-0915">Sodium</keyword>
<keyword id="KW-0739">Sodium transport</keyword>
<keyword id="KW-0769">Symport</keyword>
<keyword id="KW-0812">Transmembrane</keyword>
<keyword id="KW-1133">Transmembrane helix</keyword>
<keyword id="KW-0813">Transport</keyword>
<evidence type="ECO:0000250" key="1">
    <source>
        <dbReference type="UniProtKB" id="Q1EHB4"/>
    </source>
</evidence>
<evidence type="ECO:0000255" key="2"/>
<evidence type="ECO:0000269" key="3">
    <source>
    </source>
</evidence>
<evidence type="ECO:0000303" key="4">
    <source>
    </source>
</evidence>
<evidence type="ECO:0000305" key="5"/>
<name>SC5AC_DANRE</name>
<accession>Q7T384</accession>
<gene>
    <name type="primary">slc5a12</name>
    <name type="synonym">smctn</name>
</gene>
<reference key="1">
    <citation type="journal article" date="2007" name="J. Biol. Chem.">
        <title>Zebrafish Slc5a12 encodes an electroneutral sodium monocarboxylate transporter (SMCTn). A comparison with the electrogenic SMCT (SMCTe/Slc5a8).</title>
        <authorList>
            <person name="Plata C."/>
            <person name="Sussman C.R."/>
            <person name="Sindic A."/>
            <person name="Liang J.O."/>
            <person name="Mount D.B."/>
            <person name="Josephs Z.M."/>
            <person name="Chang M.-H."/>
            <person name="Romero M.F."/>
        </authorList>
    </citation>
    <scope>NUCLEOTIDE SEQUENCE [MRNA]</scope>
    <scope>FUNCTION</scope>
    <scope>BIOPHYSICOCHEMICAL PROPERTIES</scope>
    <scope>DEVELOPMENTAL STAGE</scope>
    <scope>TRANSPORTER ACTIVITY</scope>
</reference>
<reference key="2">
    <citation type="submission" date="2003-06" db="EMBL/GenBank/DDBJ databases">
        <authorList>
            <consortium name="NIH - Zebrafish Gene Collection (ZGC) project"/>
        </authorList>
    </citation>
    <scope>NUCLEOTIDE SEQUENCE [LARGE SCALE MRNA]</scope>
    <source>
        <tissue>Kidney</tissue>
    </source>
</reference>